<organism>
    <name type="scientific">Aliivibrio fischeri (strain MJ11)</name>
    <name type="common">Vibrio fischeri</name>
    <dbReference type="NCBI Taxonomy" id="388396"/>
    <lineage>
        <taxon>Bacteria</taxon>
        <taxon>Pseudomonadati</taxon>
        <taxon>Pseudomonadota</taxon>
        <taxon>Gammaproteobacteria</taxon>
        <taxon>Vibrionales</taxon>
        <taxon>Vibrionaceae</taxon>
        <taxon>Aliivibrio</taxon>
    </lineage>
</organism>
<sequence>MPKASDIKKGSAIEHNGKVFFVKEISKLTPSGRAGATLFRMRMYDVATGSKADESFKADDMINLADFSRRSATFSYVDGNEYVFMDSEDYTPYNFNKEAIEEELLFITEETQGLQILIVDGAPVAIELPSAVDLEIVETAPSIKGASASARTKPATMTTGLTVQVPEYIANGEKVKINTTEHKFMSRA</sequence>
<evidence type="ECO:0000255" key="1">
    <source>
        <dbReference type="HAMAP-Rule" id="MF_00646"/>
    </source>
</evidence>
<accession>B5FE04</accession>
<name>EFPL_ALIFM</name>
<feature type="chain" id="PRO_0000384930" description="Elongation factor P-like protein">
    <location>
        <begin position="1"/>
        <end position="188"/>
    </location>
</feature>
<dbReference type="EMBL" id="CP001139">
    <property type="protein sequence ID" value="ACH65929.1"/>
    <property type="molecule type" value="Genomic_DNA"/>
</dbReference>
<dbReference type="RefSeq" id="WP_005419180.1">
    <property type="nucleotide sequence ID" value="NC_011184.1"/>
</dbReference>
<dbReference type="SMR" id="B5FE04"/>
<dbReference type="KEGG" id="vfm:VFMJ11_1350"/>
<dbReference type="HOGENOM" id="CLU_074944_2_0_6"/>
<dbReference type="Proteomes" id="UP000001857">
    <property type="component" value="Chromosome I"/>
</dbReference>
<dbReference type="GO" id="GO:0005737">
    <property type="term" value="C:cytoplasm"/>
    <property type="evidence" value="ECO:0007669"/>
    <property type="project" value="InterPro"/>
</dbReference>
<dbReference type="GO" id="GO:0003746">
    <property type="term" value="F:translation elongation factor activity"/>
    <property type="evidence" value="ECO:0007669"/>
    <property type="project" value="UniProtKB-UniRule"/>
</dbReference>
<dbReference type="GO" id="GO:0043043">
    <property type="term" value="P:peptide biosynthetic process"/>
    <property type="evidence" value="ECO:0007669"/>
    <property type="project" value="InterPro"/>
</dbReference>
<dbReference type="CDD" id="cd05794">
    <property type="entry name" value="S1_EF-P_repeat_2"/>
    <property type="match status" value="1"/>
</dbReference>
<dbReference type="FunFam" id="2.40.50.140:FF:000004">
    <property type="entry name" value="Elongation factor P"/>
    <property type="match status" value="1"/>
</dbReference>
<dbReference type="Gene3D" id="2.30.30.30">
    <property type="match status" value="1"/>
</dbReference>
<dbReference type="Gene3D" id="2.40.50.140">
    <property type="entry name" value="Nucleic acid-binding proteins"/>
    <property type="match status" value="2"/>
</dbReference>
<dbReference type="HAMAP" id="MF_00646">
    <property type="entry name" value="EFP"/>
    <property type="match status" value="1"/>
</dbReference>
<dbReference type="InterPro" id="IPR015365">
    <property type="entry name" value="Elong-fact-P_C"/>
</dbReference>
<dbReference type="InterPro" id="IPR012340">
    <property type="entry name" value="NA-bd_OB-fold"/>
</dbReference>
<dbReference type="InterPro" id="IPR014722">
    <property type="entry name" value="Rib_uL2_dom2"/>
</dbReference>
<dbReference type="InterPro" id="IPR020599">
    <property type="entry name" value="Transl_elong_fac_P/YeiP"/>
</dbReference>
<dbReference type="InterPro" id="IPR013185">
    <property type="entry name" value="Transl_elong_KOW-like"/>
</dbReference>
<dbReference type="InterPro" id="IPR011897">
    <property type="entry name" value="Transl_elong_p-like_YeiP"/>
</dbReference>
<dbReference type="InterPro" id="IPR001059">
    <property type="entry name" value="Transl_elong_P/YeiP_cen"/>
</dbReference>
<dbReference type="InterPro" id="IPR013852">
    <property type="entry name" value="Transl_elong_P/YeiP_CS"/>
</dbReference>
<dbReference type="InterPro" id="IPR008991">
    <property type="entry name" value="Translation_prot_SH3-like_sf"/>
</dbReference>
<dbReference type="NCBIfam" id="NF001810">
    <property type="entry name" value="PRK00529.1"/>
    <property type="match status" value="1"/>
</dbReference>
<dbReference type="NCBIfam" id="NF003392">
    <property type="entry name" value="PRK04542.1"/>
    <property type="match status" value="1"/>
</dbReference>
<dbReference type="NCBIfam" id="TIGR02178">
    <property type="entry name" value="yeiP"/>
    <property type="match status" value="1"/>
</dbReference>
<dbReference type="PANTHER" id="PTHR30053">
    <property type="entry name" value="ELONGATION FACTOR P"/>
    <property type="match status" value="1"/>
</dbReference>
<dbReference type="PANTHER" id="PTHR30053:SF14">
    <property type="entry name" value="TRANSLATION ELONGATION FACTOR KOW-LIKE DOMAIN-CONTAINING PROTEIN"/>
    <property type="match status" value="1"/>
</dbReference>
<dbReference type="Pfam" id="PF01132">
    <property type="entry name" value="EFP"/>
    <property type="match status" value="1"/>
</dbReference>
<dbReference type="Pfam" id="PF08207">
    <property type="entry name" value="EFP_N"/>
    <property type="match status" value="1"/>
</dbReference>
<dbReference type="Pfam" id="PF09285">
    <property type="entry name" value="Elong-fact-P_C"/>
    <property type="match status" value="1"/>
</dbReference>
<dbReference type="PIRSF" id="PIRSF005901">
    <property type="entry name" value="EF-P"/>
    <property type="match status" value="1"/>
</dbReference>
<dbReference type="SMART" id="SM01185">
    <property type="entry name" value="EFP"/>
    <property type="match status" value="1"/>
</dbReference>
<dbReference type="SMART" id="SM00841">
    <property type="entry name" value="Elong-fact-P_C"/>
    <property type="match status" value="1"/>
</dbReference>
<dbReference type="SUPFAM" id="SSF50249">
    <property type="entry name" value="Nucleic acid-binding proteins"/>
    <property type="match status" value="2"/>
</dbReference>
<dbReference type="SUPFAM" id="SSF50104">
    <property type="entry name" value="Translation proteins SH3-like domain"/>
    <property type="match status" value="1"/>
</dbReference>
<dbReference type="PROSITE" id="PS01275">
    <property type="entry name" value="EFP"/>
    <property type="match status" value="1"/>
</dbReference>
<protein>
    <recommendedName>
        <fullName evidence="1">Elongation factor P-like protein</fullName>
    </recommendedName>
</protein>
<reference key="1">
    <citation type="submission" date="2008-08" db="EMBL/GenBank/DDBJ databases">
        <title>Complete sequence of Vibrio fischeri strain MJ11.</title>
        <authorList>
            <person name="Mandel M.J."/>
            <person name="Stabb E.V."/>
            <person name="Ruby E.G."/>
            <person name="Ferriera S."/>
            <person name="Johnson J."/>
            <person name="Kravitz S."/>
            <person name="Beeson K."/>
            <person name="Sutton G."/>
            <person name="Rogers Y.-H."/>
            <person name="Friedman R."/>
            <person name="Frazier M."/>
            <person name="Venter J.C."/>
        </authorList>
    </citation>
    <scope>NUCLEOTIDE SEQUENCE [LARGE SCALE GENOMIC DNA]</scope>
    <source>
        <strain>MJ11</strain>
    </source>
</reference>
<gene>
    <name type="ordered locus">VFMJ11_1350</name>
</gene>
<proteinExistence type="inferred from homology"/>
<comment type="similarity">
    <text evidence="1">Belongs to the elongation factor P family.</text>
</comment>